<feature type="chain" id="PRO_0000144197" description="Tungsten-containing formylmethanofuran dehydrogenase 2 subunit C">
    <location>
        <begin position="1"/>
        <end position="270"/>
    </location>
</feature>
<feature type="repeat" description="1">
    <location>
        <begin position="80"/>
        <end position="92"/>
    </location>
</feature>
<feature type="repeat" description="2">
    <location>
        <begin position="99"/>
        <end position="111"/>
    </location>
</feature>
<feature type="repeat" description="3">
    <location>
        <begin position="118"/>
        <end position="130"/>
    </location>
</feature>
<feature type="repeat" description="4">
    <location>
        <begin position="144"/>
        <end position="156"/>
    </location>
</feature>
<feature type="repeat" description="5">
    <location>
        <begin position="163"/>
        <end position="175"/>
    </location>
</feature>
<feature type="repeat" description="6">
    <location>
        <begin position="182"/>
        <end position="194"/>
    </location>
</feature>
<feature type="repeat" description="7">
    <location>
        <begin position="201"/>
        <end position="213"/>
    </location>
</feature>
<feature type="region of interest" description="7 X 13 AA repeats of [GW]-X-X-M-X-X-G-X-[IL]-X-[IV]-X-G">
    <location>
        <begin position="80"/>
        <end position="213"/>
    </location>
</feature>
<feature type="sequence conflict" description="In Ref. 1; CAA61214." evidence="3" ref="1">
    <original>K</original>
    <variation>T</variation>
    <location>
        <position position="223"/>
    </location>
</feature>
<organism>
    <name type="scientific">Methanothermobacter marburgensis (strain ATCC BAA-927 / DSM 2133 / JCM 14651 / NBRC 100331 / OCM 82 / Marburg)</name>
    <name type="common">Methanobacterium thermoautotrophicum</name>
    <dbReference type="NCBI Taxonomy" id="79929"/>
    <lineage>
        <taxon>Archaea</taxon>
        <taxon>Methanobacteriati</taxon>
        <taxon>Methanobacteriota</taxon>
        <taxon>Methanomada group</taxon>
        <taxon>Methanobacteria</taxon>
        <taxon>Methanobacteriales</taxon>
        <taxon>Methanobacteriaceae</taxon>
        <taxon>Methanothermobacter</taxon>
    </lineage>
</organism>
<comment type="function">
    <text evidence="2">Catalyzes the reversible oxidation of CO(2) and methanofuran (MFR) to N-formylmethanofuran (CHO-MFR). Can only oxidize formylmethanofuran. This enzyme is oxygen-labile.</text>
</comment>
<comment type="catalytic activity">
    <reaction evidence="2">
        <text>N-formylmethanofuran + 2 oxidized [2Fe-2S]-[ferredoxin] + H2O = methanofuran + 2 reduced [2Fe-2S]-[ferredoxin] + CO2 + H(+)</text>
        <dbReference type="Rhea" id="RHEA:19841"/>
        <dbReference type="Rhea" id="RHEA-COMP:10000"/>
        <dbReference type="Rhea" id="RHEA-COMP:10001"/>
        <dbReference type="ChEBI" id="CHEBI:15377"/>
        <dbReference type="ChEBI" id="CHEBI:15378"/>
        <dbReference type="ChEBI" id="CHEBI:16526"/>
        <dbReference type="ChEBI" id="CHEBI:33737"/>
        <dbReference type="ChEBI" id="CHEBI:33738"/>
        <dbReference type="ChEBI" id="CHEBI:57727"/>
        <dbReference type="ChEBI" id="CHEBI:58151"/>
        <dbReference type="EC" id="1.2.7.12"/>
    </reaction>
</comment>
<comment type="pathway">
    <text>One-carbon metabolism; methanogenesis from CO(2); 5,10-methenyl-5,6,7,8-tetrahydromethanopterin from CO(2): step 1/3.</text>
</comment>
<comment type="subunit">
    <text evidence="1">This enzyme is composed of seven subunits FwdA (65 kDa), FwdB (53 kDa), FwdC (31 kDa), FwdD (15 kDa), FwdE, FwdF and FwdG.</text>
</comment>
<comment type="induction">
    <text>By growth on tungsten or molybdenum under anaerobic conditions.</text>
</comment>
<comment type="similarity">
    <text evidence="3">Belongs to the FwdC/FmdC family.</text>
</comment>
<reference key="1">
    <citation type="journal article" date="1995" name="Eur. J. Biochem.">
        <title>The tungsten formylmethanofuran dehydrogenase from Methanobacterium thermoautotrophicum contains sequence motifs characteristic for enzymes containing molybdopterin dinucleotide.</title>
        <authorList>
            <person name="Hochheimer A."/>
            <person name="Schmitz R.A."/>
            <person name="Thauer R.K."/>
            <person name="Hedderich R."/>
        </authorList>
    </citation>
    <scope>NUCLEOTIDE SEQUENCE [GENOMIC DNA]</scope>
    <source>
        <strain>ATCC BAA-927 / DSM 2133 / JCM 14651 / NBRC 100331 / OCM 82 / Marburg</strain>
    </source>
</reference>
<reference key="2">
    <citation type="journal article" date="2010" name="J. Bacteriol.">
        <title>Complete genome sequence of Methanothermobacter marburgensis, a methanoarchaeon model organism.</title>
        <authorList>
            <person name="Liesegang H."/>
            <person name="Kaster A.K."/>
            <person name="Wiezer A."/>
            <person name="Goenrich M."/>
            <person name="Wollherr A."/>
            <person name="Seedorf H."/>
            <person name="Gottschalk G."/>
            <person name="Thauer R.K."/>
        </authorList>
    </citation>
    <scope>NUCLEOTIDE SEQUENCE [LARGE SCALE GENOMIC DNA]</scope>
    <source>
        <strain>ATCC BAA-927 / DSM 2133 / JCM 14651 / NBRC 100331 / OCM 82 / Marburg</strain>
    </source>
</reference>
<accession>Q59579</accession>
<accession>D9PU55</accession>
<accession>O08493</accession>
<dbReference type="EC" id="1.2.7.12" evidence="2"/>
<dbReference type="EMBL" id="X87970">
    <property type="protein sequence ID" value="CAA61214.1"/>
    <property type="molecule type" value="Genomic_DNA"/>
</dbReference>
<dbReference type="EMBL" id="CP001710">
    <property type="protein sequence ID" value="ADL57753.1"/>
    <property type="molecule type" value="Genomic_DNA"/>
</dbReference>
<dbReference type="RefSeq" id="WP_013294981.1">
    <property type="nucleotide sequence ID" value="NC_014408.1"/>
</dbReference>
<dbReference type="SMR" id="Q59579"/>
<dbReference type="STRING" id="79929.MTBMA_c01440"/>
<dbReference type="TCDB" id="3.D.8.1.1">
    <property type="family name" value="the na(+)- or h(+)-pumping formyl methanofuran dehydrogenase (fmf-dh) family"/>
</dbReference>
<dbReference type="PaxDb" id="79929-MTBMA_c01440"/>
<dbReference type="GeneID" id="41326932"/>
<dbReference type="GeneID" id="9703849"/>
<dbReference type="KEGG" id="mmg:MTBMA_c01440"/>
<dbReference type="PATRIC" id="fig|79929.8.peg.140"/>
<dbReference type="HOGENOM" id="CLU_072248_0_0_2"/>
<dbReference type="OrthoDB" id="106216at2157"/>
<dbReference type="UniPathway" id="UPA00640">
    <property type="reaction ID" value="UER00692"/>
</dbReference>
<dbReference type="Proteomes" id="UP000000345">
    <property type="component" value="Chromosome"/>
</dbReference>
<dbReference type="GO" id="GO:0018493">
    <property type="term" value="F:formylmethanofuran dehydrogenase activity"/>
    <property type="evidence" value="ECO:0007669"/>
    <property type="project" value="UniProtKB-EC"/>
</dbReference>
<dbReference type="GO" id="GO:0046914">
    <property type="term" value="F:transition metal ion binding"/>
    <property type="evidence" value="ECO:0007669"/>
    <property type="project" value="InterPro"/>
</dbReference>
<dbReference type="GO" id="GO:0019386">
    <property type="term" value="P:methanogenesis, from carbon dioxide"/>
    <property type="evidence" value="ECO:0007669"/>
    <property type="project" value="UniProtKB-UniPathway"/>
</dbReference>
<dbReference type="CDD" id="cd00980">
    <property type="entry name" value="FwdC/FmdC"/>
    <property type="match status" value="1"/>
</dbReference>
<dbReference type="Gene3D" id="2.160.20.60">
    <property type="entry name" value="Glutamate synthase, alpha subunit, C-terminal domain"/>
    <property type="match status" value="2"/>
</dbReference>
<dbReference type="InterPro" id="IPR054942">
    <property type="entry name" value="FMH_DH_FwdC"/>
</dbReference>
<dbReference type="InterPro" id="IPR017550">
    <property type="entry name" value="Formylmethanofuran_DH_suC"/>
</dbReference>
<dbReference type="InterPro" id="IPR036485">
    <property type="entry name" value="Glu_synth_asu_C_sf"/>
</dbReference>
<dbReference type="NCBIfam" id="NF042910">
    <property type="entry name" value="FMH_DH_FwdC"/>
    <property type="match status" value="1"/>
</dbReference>
<dbReference type="NCBIfam" id="TIGR03122">
    <property type="entry name" value="one_C_dehyd_C"/>
    <property type="match status" value="1"/>
</dbReference>
<dbReference type="PANTHER" id="PTHR39673">
    <property type="entry name" value="TUNGSTEN FORMYLMETHANOFURAN DEHYDROGENASE, SUBUNIT C (FWDC)"/>
    <property type="match status" value="1"/>
</dbReference>
<dbReference type="PANTHER" id="PTHR39673:SF5">
    <property type="entry name" value="TUNGSTEN-CONTAINING FORMYLMETHANOFURAN DEHYDROGENASE 2 SUBUNIT C"/>
    <property type="match status" value="1"/>
</dbReference>
<dbReference type="SUPFAM" id="SSF69336">
    <property type="entry name" value="Alpha subunit of glutamate synthase, C-terminal domain"/>
    <property type="match status" value="1"/>
</dbReference>
<sequence>MSEIILTPKEQPEVPLEAPNIKPDVFAGKSIDEIKNIQIMYGNEVVKLGDFFEVSGEPADAASDIKIIIDGDVYNTKRIGQEMTAGEILVKGNVNMYVGAGMKGGRITVEGNAASWAGQDMRGGELEILGNAADYVGSSYRGDWRGMSGGVITVHGNAGNEIGEYMNGGKIIIKGDVNIMPGIHMNNGLIIIEGNAVARVGGEMAGGTIIVKGMIQEFLPGFKYLGVEKDIEVNGETFPGAFYKFEGDHAIKGAKGIVYAAVGCNGHIEP</sequence>
<keyword id="KW-0484">Methanogenesis</keyword>
<keyword id="KW-0560">Oxidoreductase</keyword>
<keyword id="KW-0677">Repeat</keyword>
<name>FWDC_METTM</name>
<proteinExistence type="evidence at transcript level"/>
<evidence type="ECO:0000250" key="1"/>
<evidence type="ECO:0000250" key="2">
    <source>
        <dbReference type="UniProtKB" id="Q48943"/>
    </source>
</evidence>
<evidence type="ECO:0000305" key="3"/>
<gene>
    <name type="primary">fwdC</name>
    <name type="ordered locus">MTBMA_c01440</name>
</gene>
<protein>
    <recommendedName>
        <fullName>Tungsten-containing formylmethanofuran dehydrogenase 2 subunit C</fullName>
        <ecNumber evidence="2">1.2.7.12</ecNumber>
    </recommendedName>
    <alternativeName>
        <fullName>Tungsten-containing formylmethanofuran dehydrogenase II subunit C</fullName>
    </alternativeName>
</protein>